<reference key="1">
    <citation type="journal article" date="2005" name="Nucleic Acids Res.">
        <title>The genome sequence of Salmonella enterica serovar Choleraesuis, a highly invasive and resistant zoonotic pathogen.</title>
        <authorList>
            <person name="Chiu C.-H."/>
            <person name="Tang P."/>
            <person name="Chu C."/>
            <person name="Hu S."/>
            <person name="Bao Q."/>
            <person name="Yu J."/>
            <person name="Chou Y.-Y."/>
            <person name="Wang H.-S."/>
            <person name="Lee Y.-S."/>
        </authorList>
    </citation>
    <scope>NUCLEOTIDE SEQUENCE [LARGE SCALE GENOMIC DNA]</scope>
    <source>
        <strain>SC-B67</strain>
    </source>
</reference>
<name>WZYE_SALCH</name>
<protein>
    <recommendedName>
        <fullName evidence="1">Probable ECA polymerase</fullName>
    </recommendedName>
</protein>
<proteinExistence type="inferred from homology"/>
<feature type="chain" id="PRO_0000208541" description="Probable ECA polymerase">
    <location>
        <begin position="1"/>
        <end position="452"/>
    </location>
</feature>
<feature type="transmembrane region" description="Helical" evidence="1">
    <location>
        <begin position="6"/>
        <end position="26"/>
    </location>
</feature>
<feature type="transmembrane region" description="Helical" evidence="1">
    <location>
        <begin position="37"/>
        <end position="57"/>
    </location>
</feature>
<feature type="transmembrane region" description="Helical" evidence="1">
    <location>
        <begin position="63"/>
        <end position="83"/>
    </location>
</feature>
<feature type="transmembrane region" description="Helical" evidence="1">
    <location>
        <begin position="118"/>
        <end position="138"/>
    </location>
</feature>
<feature type="transmembrane region" description="Helical" evidence="1">
    <location>
        <begin position="155"/>
        <end position="175"/>
    </location>
</feature>
<feature type="transmembrane region" description="Helical" evidence="1">
    <location>
        <begin position="181"/>
        <end position="201"/>
    </location>
</feature>
<feature type="transmembrane region" description="Helical" evidence="1">
    <location>
        <begin position="207"/>
        <end position="227"/>
    </location>
</feature>
<feature type="transmembrane region" description="Helical" evidence="1">
    <location>
        <begin position="228"/>
        <end position="248"/>
    </location>
</feature>
<feature type="transmembrane region" description="Helical" evidence="1">
    <location>
        <begin position="341"/>
        <end position="361"/>
    </location>
</feature>
<feature type="transmembrane region" description="Helical" evidence="1">
    <location>
        <begin position="378"/>
        <end position="398"/>
    </location>
</feature>
<feature type="transmembrane region" description="Helical" evidence="1">
    <location>
        <begin position="410"/>
        <end position="430"/>
    </location>
</feature>
<organism>
    <name type="scientific">Salmonella choleraesuis (strain SC-B67)</name>
    <dbReference type="NCBI Taxonomy" id="321314"/>
    <lineage>
        <taxon>Bacteria</taxon>
        <taxon>Pseudomonadati</taxon>
        <taxon>Pseudomonadota</taxon>
        <taxon>Gammaproteobacteria</taxon>
        <taxon>Enterobacterales</taxon>
        <taxon>Enterobacteriaceae</taxon>
        <taxon>Salmonella</taxon>
    </lineage>
</organism>
<evidence type="ECO:0000255" key="1">
    <source>
        <dbReference type="HAMAP-Rule" id="MF_01003"/>
    </source>
</evidence>
<dbReference type="EMBL" id="AE017220">
    <property type="protein sequence ID" value="AAX67739.1"/>
    <property type="molecule type" value="Genomic_DNA"/>
</dbReference>
<dbReference type="RefSeq" id="WP_000115412.1">
    <property type="nucleotide sequence ID" value="NC_006905.1"/>
</dbReference>
<dbReference type="KEGG" id="sec:SCH_3833"/>
<dbReference type="HOGENOM" id="CLU_049711_0_0_6"/>
<dbReference type="UniPathway" id="UPA00566"/>
<dbReference type="Proteomes" id="UP000000538">
    <property type="component" value="Chromosome"/>
</dbReference>
<dbReference type="GO" id="GO:0005886">
    <property type="term" value="C:plasma membrane"/>
    <property type="evidence" value="ECO:0007669"/>
    <property type="project" value="UniProtKB-SubCell"/>
</dbReference>
<dbReference type="GO" id="GO:0009246">
    <property type="term" value="P:enterobacterial common antigen biosynthetic process"/>
    <property type="evidence" value="ECO:0007669"/>
    <property type="project" value="UniProtKB-UniRule"/>
</dbReference>
<dbReference type="HAMAP" id="MF_01003">
    <property type="entry name" value="WzyE"/>
    <property type="match status" value="1"/>
</dbReference>
<dbReference type="InterPro" id="IPR010691">
    <property type="entry name" value="WzyE"/>
</dbReference>
<dbReference type="NCBIfam" id="NF002820">
    <property type="entry name" value="PRK02975.1"/>
    <property type="match status" value="1"/>
</dbReference>
<dbReference type="Pfam" id="PF06899">
    <property type="entry name" value="WzyE"/>
    <property type="match status" value="1"/>
</dbReference>
<sequence length="452" mass="51633">MSVMQFSGLLVVWLLSTLFIATLTWFEFRRVRFNFNVFFSLLFLLTFFFGFPLTSVLVFRFDVGVAPPEILLQALLSAACFYGVYYVTYKTRLRKRVVDVPRKPLFTMNRVETHLTWVILMGIALVSVAIFFMHNGFLLFRLHSYSQIFSSEVSGVALKRFFYFFIPAMLVVYFLRQDSKAWLFFLVSTVAFGLLTYMIVGGTRANIIIAFAIFLFIGIIRGWISLWMLAAAGVLGIVGMFWLALKRYGLNVSGDEAFYTFLYLTRDTFSPWENLALLLQNYHNIEFQGLAPIVRDFYVFIPTWLWPGRPSIVLNSANYFTWEVLNNHSGLAISPTLIGSLVVMGGALFIPLGAIVVGLIIKWFDWLYELGNREPNRYKAAILHSFCFGAIFNMIVLAREGLDSFVSRVVFFLVVFGASLLVAKLLFWLFDSAGLIHKRTTSLPQAQVEGKL</sequence>
<keyword id="KW-0997">Cell inner membrane</keyword>
<keyword id="KW-1003">Cell membrane</keyword>
<keyword id="KW-0472">Membrane</keyword>
<keyword id="KW-0812">Transmembrane</keyword>
<keyword id="KW-1133">Transmembrane helix</keyword>
<accession>Q57HS3</accession>
<gene>
    <name evidence="1" type="primary">wzyE</name>
    <name type="ordered locus">SCH_3833</name>
</gene>
<comment type="function">
    <text evidence="1">Probably involved in the polymerization of enterobacterial common antigen (ECA) trisaccharide repeat units.</text>
</comment>
<comment type="pathway">
    <text evidence="1">Bacterial outer membrane biogenesis; enterobacterial common antigen biosynthesis.</text>
</comment>
<comment type="subunit">
    <text evidence="1">Probably part of a complex composed of WzxE, WzyE and WzzE.</text>
</comment>
<comment type="subcellular location">
    <subcellularLocation>
        <location evidence="1">Cell inner membrane</location>
        <topology evidence="1">Multi-pass membrane protein</topology>
    </subcellularLocation>
</comment>
<comment type="similarity">
    <text evidence="1">Belongs to the WzyE family.</text>
</comment>